<name>ATNL_EMENI</name>
<feature type="chain" id="PRO_0000444140" description="Probable thioesterase atnL">
    <location>
        <begin position="1"/>
        <end position="306"/>
    </location>
</feature>
<reference key="1">
    <citation type="journal article" date="2005" name="Nature">
        <title>Sequencing of Aspergillus nidulans and comparative analysis with A. fumigatus and A. oryzae.</title>
        <authorList>
            <person name="Galagan J.E."/>
            <person name="Calvo S.E."/>
            <person name="Cuomo C."/>
            <person name="Ma L.-J."/>
            <person name="Wortman J.R."/>
            <person name="Batzoglou S."/>
            <person name="Lee S.-I."/>
            <person name="Bastuerkmen M."/>
            <person name="Spevak C.C."/>
            <person name="Clutterbuck J."/>
            <person name="Kapitonov V."/>
            <person name="Jurka J."/>
            <person name="Scazzocchio C."/>
            <person name="Farman M.L."/>
            <person name="Butler J."/>
            <person name="Purcell S."/>
            <person name="Harris S."/>
            <person name="Braus G.H."/>
            <person name="Draht O."/>
            <person name="Busch S."/>
            <person name="D'Enfert C."/>
            <person name="Bouchier C."/>
            <person name="Goldman G.H."/>
            <person name="Bell-Pedersen D."/>
            <person name="Griffiths-Jones S."/>
            <person name="Doonan J.H."/>
            <person name="Yu J."/>
            <person name="Vienken K."/>
            <person name="Pain A."/>
            <person name="Freitag M."/>
            <person name="Selker E.U."/>
            <person name="Archer D.B."/>
            <person name="Penalva M.A."/>
            <person name="Oakley B.R."/>
            <person name="Momany M."/>
            <person name="Tanaka T."/>
            <person name="Kumagai T."/>
            <person name="Asai K."/>
            <person name="Machida M."/>
            <person name="Nierman W.C."/>
            <person name="Denning D.W."/>
            <person name="Caddick M.X."/>
            <person name="Hynes M."/>
            <person name="Paoletti M."/>
            <person name="Fischer R."/>
            <person name="Miller B.L."/>
            <person name="Dyer P.S."/>
            <person name="Sachs M.S."/>
            <person name="Osmani S.A."/>
            <person name="Birren B.W."/>
        </authorList>
    </citation>
    <scope>NUCLEOTIDE SEQUENCE [LARGE SCALE GENOMIC DNA]</scope>
    <source>
        <strain>FGSC A4 / ATCC 38163 / CBS 112.46 / NRRL 194 / M139</strain>
    </source>
</reference>
<reference key="2">
    <citation type="journal article" date="2009" name="Fungal Genet. Biol.">
        <title>The 2008 update of the Aspergillus nidulans genome annotation: a community effort.</title>
        <authorList>
            <person name="Wortman J.R."/>
            <person name="Gilsenan J.M."/>
            <person name="Joardar V."/>
            <person name="Deegan J."/>
            <person name="Clutterbuck J."/>
            <person name="Andersen M.R."/>
            <person name="Archer D."/>
            <person name="Bencina M."/>
            <person name="Braus G."/>
            <person name="Coutinho P."/>
            <person name="von Dohren H."/>
            <person name="Doonan J."/>
            <person name="Driessen A.J."/>
            <person name="Durek P."/>
            <person name="Espeso E."/>
            <person name="Fekete E."/>
            <person name="Flipphi M."/>
            <person name="Estrada C.G."/>
            <person name="Geysens S."/>
            <person name="Goldman G."/>
            <person name="de Groot P.W."/>
            <person name="Hansen K."/>
            <person name="Harris S.D."/>
            <person name="Heinekamp T."/>
            <person name="Helmstaedt K."/>
            <person name="Henrissat B."/>
            <person name="Hofmann G."/>
            <person name="Homan T."/>
            <person name="Horio T."/>
            <person name="Horiuchi H."/>
            <person name="James S."/>
            <person name="Jones M."/>
            <person name="Karaffa L."/>
            <person name="Karanyi Z."/>
            <person name="Kato M."/>
            <person name="Keller N."/>
            <person name="Kelly D.E."/>
            <person name="Kiel J.A."/>
            <person name="Kim J.M."/>
            <person name="van der Klei I.J."/>
            <person name="Klis F.M."/>
            <person name="Kovalchuk A."/>
            <person name="Krasevec N."/>
            <person name="Kubicek C.P."/>
            <person name="Liu B."/>
            <person name="Maccabe A."/>
            <person name="Meyer V."/>
            <person name="Mirabito P."/>
            <person name="Miskei M."/>
            <person name="Mos M."/>
            <person name="Mullins J."/>
            <person name="Nelson D.R."/>
            <person name="Nielsen J."/>
            <person name="Oakley B.R."/>
            <person name="Osmani S.A."/>
            <person name="Pakula T."/>
            <person name="Paszewski A."/>
            <person name="Paulsen I."/>
            <person name="Pilsyk S."/>
            <person name="Pocsi I."/>
            <person name="Punt P.J."/>
            <person name="Ram A.F."/>
            <person name="Ren Q."/>
            <person name="Robellet X."/>
            <person name="Robson G."/>
            <person name="Seiboth B."/>
            <person name="van Solingen P."/>
            <person name="Specht T."/>
            <person name="Sun J."/>
            <person name="Taheri-Talesh N."/>
            <person name="Takeshita N."/>
            <person name="Ussery D."/>
            <person name="vanKuyk P.A."/>
            <person name="Visser H."/>
            <person name="van de Vondervoort P.J."/>
            <person name="de Vries R.P."/>
            <person name="Walton J."/>
            <person name="Xiang X."/>
            <person name="Xiong Y."/>
            <person name="Zeng A.P."/>
            <person name="Brandt B.W."/>
            <person name="Cornell M.J."/>
            <person name="van den Hondel C.A."/>
            <person name="Visser J."/>
            <person name="Oliver S.G."/>
            <person name="Turner G."/>
        </authorList>
    </citation>
    <scope>GENOME REANNOTATION</scope>
    <source>
        <strain>FGSC A4 / ATCC 38163 / CBS 112.46 / NRRL 194 / M139</strain>
    </source>
</reference>
<reference key="3">
    <citation type="journal article" date="2013" name="Proc. Natl. Acad. Sci. U.S.A.">
        <title>Accurate prediction of secondary metabolite gene clusters in filamentous fungi.</title>
        <authorList>
            <person name="Andersen M.R."/>
            <person name="Nielsen J.B."/>
            <person name="Klitgaard A."/>
            <person name="Petersen L.M."/>
            <person name="Zachariasen M."/>
            <person name="Hansen T.J."/>
            <person name="Blicher L.H."/>
            <person name="Gotfredsen C.H."/>
            <person name="Larsen T.O."/>
            <person name="Nielsen K.F."/>
            <person name="Mortensen U.H."/>
        </authorList>
    </citation>
    <scope>IDENTIFICATION OF THE CLUSTER</scope>
</reference>
<reference key="4">
    <citation type="journal article" date="2016" name="ACS Chem. Biol.">
        <title>New aspercryptins, lipopeptide natural products, revealed by HDAC inhibition in Aspergillus nidulans.</title>
        <authorList>
            <person name="Henke M.T."/>
            <person name="Soukup A.A."/>
            <person name="Goering A.W."/>
            <person name="McClure R.A."/>
            <person name="Thomson R.J."/>
            <person name="Keller N.P."/>
            <person name="Kelleher N.L."/>
        </authorList>
    </citation>
    <scope>FUNCTION</scope>
    <scope>INDUCTION</scope>
</reference>
<reference key="5">
    <citation type="journal article" date="2016" name="Angew. Chem. Int. Ed.">
        <title>Development of genetic dereplication strains in Aspergillus nidulans results in the discovery of aspercryptin.</title>
        <authorList>
            <person name="Chiang Y.M."/>
            <person name="Ahuja M."/>
            <person name="Oakley C.E."/>
            <person name="Entwistle R."/>
            <person name="Asokan A."/>
            <person name="Zutz C."/>
            <person name="Wang C.C."/>
            <person name="Oakley B.R."/>
        </authorList>
    </citation>
    <scope>FUNCTION</scope>
    <scope>DISRUPTION PHENOTYPE</scope>
</reference>
<comment type="function">
    <text evidence="1 2 3">Part of the gene cluster that mediates the biosynthesis of aspercryptins, linear lipopeptides built from six amino acids including 2 highly unusual and nonproteogenic amino acids, 2-amino-octanoic acid (2aoa) and 2-amino-dodecanol (2adol) (PubMed:23248299, PubMed:26563584, PubMed:27310134). The core structure of aspercryptins is as follows: Ser/Ala-Thr-Ile/Val-2aoa-Asn-2adol (PubMed:27310134). The first step of aspercryptin biosynthesis is the generation of the fatty acid precursors, octanoic and dodecanoic acids, by the FAS subunits atnF and atnM (PubMed:26563584, PubMed:27310134). The fatty acid precursors are likely transformed into the corresponding alpha-amino fatty acids in three steps (PubMed:26563584, PubMed:27310134). First, they are hydroxylated by the cytochrome P450 monooxygenase atnE, then oxidized to the corresponding alpha-keto acids by the NAD(P)-dependent oxidoreductase atnD, and finally converted to the alpha-amino fatty acids by the PLP-dependent aminotransferases atnH or atnJ (PubMed:26563584, PubMed:27310134). the alpha-amino fatty acids, 2-amino-octanoic and 2-amino-dodecanoic acids, are recognized, activated, and covalently tethered to the NRPS atnA by its fourth and sixth adenylation domains (PubMed:27310134). The second module of atnA is the Thr module and contains an epimerase (E) domain responsible for the epimerization of Thr to D-allo-Thr (PubMed:26563584). Additionally, despite atnA having only one epimerase domain, the first amino acid of aspercryptin A1 is D-Ser, suggesting that serine is either loaded directly as D-Ser on the first module or that the epimerase domain in the threonine module epimerizes both L-Ser and L-Thr (PubMed:27310134). After condensation of the hexapeptide of aspercryptin, the C-terminal reductase (TE) domain might be involved in the reductive release and production of the aldehyde hexapeptide (PubMed:26563584). Further reduction would generate aspercryptins (PubMed:26563584, PubMed:27310134). The variety of aspercryptins produced reflects the flexibility of the atnA NRPS, allowing incorporation of alanine instead of serine, valine for isoleucine, and a C10 fatty amino alcohol instead of the C12 version (PubMed:27310134). AtnB seems to be involved in the selectivity for Ile versus Val by the third module (PubMed:26563584). Moreover, type B, C and D aspercryptins have an additional N-terminal cichorine, acetyl and propionyl group respectively (PubMed:27310134).</text>
</comment>
<comment type="induction">
    <text evidence="3">Expression is positively regulated by the aspercryptin cluser-specific transcription factor atnN (PubMed:27310134).</text>
</comment>
<comment type="disruption phenotype">
    <text evidence="2">Does not alter the yield of aspercryptin significantly (PubMed:26563584).</text>
</comment>
<comment type="similarity">
    <text evidence="5">Belongs to the lcsJ thioesterase family.</text>
</comment>
<organism>
    <name type="scientific">Emericella nidulans (strain FGSC A4 / ATCC 38163 / CBS 112.46 / NRRL 194 / M139)</name>
    <name type="common">Aspergillus nidulans</name>
    <dbReference type="NCBI Taxonomy" id="227321"/>
    <lineage>
        <taxon>Eukaryota</taxon>
        <taxon>Fungi</taxon>
        <taxon>Dikarya</taxon>
        <taxon>Ascomycota</taxon>
        <taxon>Pezizomycotina</taxon>
        <taxon>Eurotiomycetes</taxon>
        <taxon>Eurotiomycetidae</taxon>
        <taxon>Eurotiales</taxon>
        <taxon>Aspergillaceae</taxon>
        <taxon>Aspergillus</taxon>
        <taxon>Aspergillus subgen. Nidulantes</taxon>
    </lineage>
</organism>
<protein>
    <recommendedName>
        <fullName evidence="4">Probable thioesterase atnL</fullName>
        <ecNumber evidence="6">2.3.1.-</ecNumber>
    </recommendedName>
    <alternativeName>
        <fullName evidence="4">Aspercryptin biosynthesis cluster protein L</fullName>
    </alternativeName>
</protein>
<evidence type="ECO:0000269" key="1">
    <source>
    </source>
</evidence>
<evidence type="ECO:0000269" key="2">
    <source>
    </source>
</evidence>
<evidence type="ECO:0000269" key="3">
    <source>
    </source>
</evidence>
<evidence type="ECO:0000303" key="4">
    <source>
    </source>
</evidence>
<evidence type="ECO:0000305" key="5"/>
<evidence type="ECO:0000305" key="6">
    <source>
    </source>
</evidence>
<dbReference type="EC" id="2.3.1.-" evidence="6"/>
<dbReference type="EMBL" id="BN001302">
    <property type="protein sequence ID" value="CBF73433.1"/>
    <property type="molecule type" value="Genomic_DNA"/>
</dbReference>
<dbReference type="EMBL" id="AACD01000135">
    <property type="protein sequence ID" value="EAA59528.1"/>
    <property type="molecule type" value="Genomic_DNA"/>
</dbReference>
<dbReference type="RefSeq" id="XP_681143.1">
    <property type="nucleotide sequence ID" value="XM_676051.1"/>
</dbReference>
<dbReference type="SMR" id="Q5AV06"/>
<dbReference type="FunCoup" id="Q5AV06">
    <property type="interactions" value="28"/>
</dbReference>
<dbReference type="STRING" id="227321.Q5AV06"/>
<dbReference type="EnsemblFungi" id="CBF73433">
    <property type="protein sequence ID" value="CBF73433"/>
    <property type="gene ID" value="ANIA_07874"/>
</dbReference>
<dbReference type="GeneID" id="2869212"/>
<dbReference type="KEGG" id="ani:ANIA_07874"/>
<dbReference type="VEuPathDB" id="FungiDB:AN7874"/>
<dbReference type="eggNOG" id="KOG4366">
    <property type="taxonomic scope" value="Eukaryota"/>
</dbReference>
<dbReference type="HOGENOM" id="CLU_040660_1_1_1"/>
<dbReference type="InParanoid" id="Q5AV06"/>
<dbReference type="OMA" id="FECDFYL"/>
<dbReference type="OrthoDB" id="265761at2759"/>
<dbReference type="Proteomes" id="UP000000560">
    <property type="component" value="Chromosome II"/>
</dbReference>
<dbReference type="GO" id="GO:0016740">
    <property type="term" value="F:transferase activity"/>
    <property type="evidence" value="ECO:0007669"/>
    <property type="project" value="UniProtKB-KW"/>
</dbReference>
<dbReference type="CDD" id="cd00586">
    <property type="entry name" value="4HBT"/>
    <property type="match status" value="1"/>
</dbReference>
<dbReference type="InterPro" id="IPR029069">
    <property type="entry name" value="HotDog_dom_sf"/>
</dbReference>
<dbReference type="InterPro" id="IPR051490">
    <property type="entry name" value="THEM6_lcsJ_thioesterase"/>
</dbReference>
<dbReference type="PANTHER" id="PTHR12475">
    <property type="match status" value="1"/>
</dbReference>
<dbReference type="PANTHER" id="PTHR12475:SF4">
    <property type="entry name" value="PROTEIN THEM6"/>
    <property type="match status" value="1"/>
</dbReference>
<dbReference type="Pfam" id="PF13279">
    <property type="entry name" value="4HBT_2"/>
    <property type="match status" value="1"/>
</dbReference>
<dbReference type="SUPFAM" id="SSF54637">
    <property type="entry name" value="Thioesterase/thiol ester dehydrase-isomerase"/>
    <property type="match status" value="1"/>
</dbReference>
<proteinExistence type="evidence at transcript level"/>
<sequence>MALPSSVESLLSTVWDFITINRLLTGAGIYFLLLNAKGLPGVWHYRLFKGLFIELVWKRSTTPAPLLDSQGRPRLYSYFVTECSNPVIECDYNLHKSNSTFFSDLDINRTQLMMTHFKHVLSTASMPRKTKTANGNGDDQKRKRPLMMAMGGVSCLFHREIKPLQRYEVWSRVLAWDEKWVYVVSYFVKKGSLSRDGNFKGDLDLDPKVNAKVVLASCMARYVFKEGRITVKPERVLQECGLFPLAEEAVAGEKAEKASVDSWGKEQFEEARQKGLVTAGKFSGLEVLPLMTGFGESGVLGRYNDF</sequence>
<keyword id="KW-1185">Reference proteome</keyword>
<keyword id="KW-0808">Transferase</keyword>
<accession>Q5AV06</accession>
<accession>A0A1U8QM29</accession>
<accession>C8V3X9</accession>
<gene>
    <name evidence="4" type="primary">atnL</name>
    <name type="ORF">ANIA_07874</name>
</gene>